<gene>
    <name evidence="4" type="primary">epoA</name>
</gene>
<protein>
    <recommendedName>
        <fullName evidence="7">Putative epoxide hydrolase</fullName>
        <ecNumber evidence="7">3.-.-.-</ecNumber>
    </recommendedName>
    <alternativeName>
        <fullName evidence="4">Dothistromin biosynthesis protein epoA</fullName>
    </alternativeName>
</protein>
<dbReference type="EC" id="3.-.-.-" evidence="7"/>
<dbReference type="EMBL" id="DQ149246">
    <property type="protein sequence ID" value="AAZ95015.1"/>
    <property type="molecule type" value="Genomic_DNA"/>
</dbReference>
<dbReference type="SMR" id="Q30DW8"/>
<dbReference type="ESTHER" id="mycpj-q30dw8">
    <property type="family name" value="Epoxide_hydrolase"/>
</dbReference>
<dbReference type="OMA" id="WVELMGR"/>
<dbReference type="GO" id="GO:0004301">
    <property type="term" value="F:epoxide hydrolase activity"/>
    <property type="evidence" value="ECO:0007669"/>
    <property type="project" value="TreeGrafter"/>
</dbReference>
<dbReference type="GO" id="GO:0097176">
    <property type="term" value="P:epoxide metabolic process"/>
    <property type="evidence" value="ECO:0007669"/>
    <property type="project" value="TreeGrafter"/>
</dbReference>
<dbReference type="Gene3D" id="3.40.50.1820">
    <property type="entry name" value="alpha/beta hydrolase"/>
    <property type="match status" value="1"/>
</dbReference>
<dbReference type="InterPro" id="IPR029058">
    <property type="entry name" value="AB_hydrolase_fold"/>
</dbReference>
<dbReference type="InterPro" id="IPR000639">
    <property type="entry name" value="Epox_hydrolase-like"/>
</dbReference>
<dbReference type="InterPro" id="IPR010497">
    <property type="entry name" value="Epoxide_hydro_N"/>
</dbReference>
<dbReference type="InterPro" id="IPR016292">
    <property type="entry name" value="Epoxide_hydrolase"/>
</dbReference>
<dbReference type="PANTHER" id="PTHR21661">
    <property type="entry name" value="EPOXIDE HYDROLASE 1-RELATED"/>
    <property type="match status" value="1"/>
</dbReference>
<dbReference type="PANTHER" id="PTHR21661:SF39">
    <property type="entry name" value="HYDROLASE, PUTATIVE (AFU_ORTHOLOGUE AFUA_3G08960)-RELATED"/>
    <property type="match status" value="1"/>
</dbReference>
<dbReference type="Pfam" id="PF06441">
    <property type="entry name" value="EHN"/>
    <property type="match status" value="1"/>
</dbReference>
<dbReference type="PIRSF" id="PIRSF001112">
    <property type="entry name" value="Epoxide_hydrolase"/>
    <property type="match status" value="1"/>
</dbReference>
<dbReference type="PRINTS" id="PR00412">
    <property type="entry name" value="EPOXHYDRLASE"/>
</dbReference>
<dbReference type="SUPFAM" id="SSF53474">
    <property type="entry name" value="alpha/beta-Hydrolases"/>
    <property type="match status" value="1"/>
</dbReference>
<name>EPOA_DOTSE</name>
<accession>Q30DW8</accession>
<reference key="1">
    <citation type="journal article" date="2006" name="Mycopathologia">
        <title>A polyketide synthase gene required for biosynthesis of the aflatoxin-like toxin, dothistromin.</title>
        <authorList>
            <person name="Bradshaw R.E."/>
            <person name="Jin H."/>
            <person name="Morgan B.S."/>
            <person name="Schwelm A."/>
            <person name="Teddy O.R."/>
            <person name="Young C.A."/>
            <person name="Zhang S."/>
        </authorList>
    </citation>
    <scope>NUCLEOTIDE SEQUENCE [GENOMIC DNA]</scope>
    <source>
        <strain>NZE7</strain>
    </source>
</reference>
<reference key="2">
    <citation type="journal article" date="2007" name="Fungal Genet. Biol.">
        <title>A fragmented aflatoxin-like gene cluster in the forest pathogen Dothistroma septosporum.</title>
        <authorList>
            <person name="Zhang S."/>
            <person name="Schwelm A."/>
            <person name="Jin H."/>
            <person name="Collins L.J."/>
            <person name="Bradshaw R.E."/>
        </authorList>
    </citation>
    <scope>NUCLEOTIDE SEQUENCE [GENOMIC DNA]</scope>
    <source>
        <strain>NZE7</strain>
    </source>
</reference>
<reference key="3">
    <citation type="submission" date="2010-07" db="EMBL/GenBank/DDBJ databases">
        <authorList>
            <person name="Zhang S."/>
            <person name="Bradshaw R.E."/>
        </authorList>
    </citation>
    <scope>NUCLEOTIDE SEQUENCE [GENOMIC DNA]</scope>
    <source>
        <strain>NZE1 / ATCC MYA-605</strain>
    </source>
</reference>
<reference key="4">
    <citation type="journal article" date="2002" name="Appl. Environ. Microbiol.">
        <title>Dothistroma pini, a forest pathogen, contains homologs of aflatoxin biosynthetic pathway genes.</title>
        <authorList>
            <person name="Bradshaw R.E."/>
            <person name="Bhatnagar D."/>
            <person name="Ganley R.J."/>
            <person name="Gillman C.J."/>
            <person name="Monahan B.J."/>
            <person name="Seconi J.M."/>
        </authorList>
    </citation>
    <scope>FUNCTION</scope>
</reference>
<reference key="5">
    <citation type="journal article" date="2010" name="Toxins">
        <title>Genetics of dothistromin biosynthesis of Dothistroma septosporum: an update.</title>
        <authorList>
            <person name="Schwelm A."/>
            <person name="Bradshaw R.E."/>
        </authorList>
    </citation>
    <scope>REVIEW ON FUNCTION</scope>
    <scope>PATHWAY</scope>
</reference>
<reference key="6">
    <citation type="journal article" date="2013" name="Fungal Genet. Biol.">
        <title>Dothistromin genes at multiple separate loci are regulated by AflR.</title>
        <authorList>
            <person name="Chettri P."/>
            <person name="Ehrlich K.C."/>
            <person name="Cary J.W."/>
            <person name="Collemare J."/>
            <person name="Cox M.P."/>
            <person name="Griffiths S.A."/>
            <person name="Olson M.A."/>
            <person name="de Wit P.J."/>
            <person name="Bradshaw R.E."/>
        </authorList>
    </citation>
    <scope>FUNCTION</scope>
    <scope>PATHWAY</scope>
</reference>
<reference key="7">
    <citation type="journal article" date="2013" name="New Phytol.">
        <title>Fragmentation of an aflatoxin-like gene cluster in a forest pathogen.</title>
        <authorList>
            <person name="Bradshaw R.E."/>
            <person name="Slot J.C."/>
            <person name="Moore G.G."/>
            <person name="Chettri P."/>
            <person name="de Wit P.J."/>
            <person name="Ehrlich K.C."/>
            <person name="Ganley A.R."/>
            <person name="Olson M.A."/>
            <person name="Rokas A."/>
            <person name="Carbone I."/>
            <person name="Cox M.P."/>
        </authorList>
    </citation>
    <scope>FUNCTION</scope>
</reference>
<sequence>MEGYTTLPSTATLKPSPFTVSISESKLQTLQDLIRLSPIGPADYNNSSPSTGSKYGIRRDWLINAKKQWEDNFSWRTFEKKLKKYPQYTVPVKGESGETIEIHFIALFSQRQDARPLAFYHGWPSSPFDFLPILDLLTNKYTPETLPYHIIVPSLPGFCFSGSPPIDLDYDMPQAAYLLNNLMIGLGLDGYIAQGGDLGSGISREQAAGCEACKGFHLNMILLPPPANMKELTLEEVEKKAMPNALAFRQSGMAYALEHGTRGGTIGLALQASPVALLCWIGEKMMAWSDSSSQPSLEQILETVSLYWLTDSITRGLYPYRRFASGNEPKINFIEKPLGYSFFPNTYLPCPVSWAKTTANLVQYRRHESGGHFAPWERPRELLEDVEEYVDVAFGKKDSPMMGPKAVEDVSGSGSHARGL</sequence>
<evidence type="ECO:0000250" key="1">
    <source>
        <dbReference type="UniProtKB" id="Q12437"/>
    </source>
</evidence>
<evidence type="ECO:0000269" key="2">
    <source>
    </source>
</evidence>
<evidence type="ECO:0000269" key="3">
    <source>
    </source>
</evidence>
<evidence type="ECO:0000303" key="4">
    <source>
    </source>
</evidence>
<evidence type="ECO:0000303" key="5">
    <source>
    </source>
</evidence>
<evidence type="ECO:0000305" key="6"/>
<evidence type="ECO:0000305" key="7">
    <source>
    </source>
</evidence>
<evidence type="ECO:0000305" key="8">
    <source>
    </source>
</evidence>
<evidence type="ECO:0000305" key="9">
    <source>
    </source>
</evidence>
<feature type="chain" id="PRO_0000443469" description="Putative epoxide hydrolase">
    <location>
        <begin position="1"/>
        <end position="420"/>
    </location>
</feature>
<organism>
    <name type="scientific">Dothistroma septosporum</name>
    <name type="common">Red band needle blight fungus</name>
    <name type="synonym">Mycosphaerella pini</name>
    <dbReference type="NCBI Taxonomy" id="64363"/>
    <lineage>
        <taxon>Eukaryota</taxon>
        <taxon>Fungi</taxon>
        <taxon>Dikarya</taxon>
        <taxon>Ascomycota</taxon>
        <taxon>Pezizomycotina</taxon>
        <taxon>Dothideomycetes</taxon>
        <taxon>Dothideomycetidae</taxon>
        <taxon>Mycosphaerellales</taxon>
        <taxon>Mycosphaerellaceae</taxon>
        <taxon>Dothistroma</taxon>
    </lineage>
</organism>
<keyword id="KW-0378">Hydrolase</keyword>
<proteinExistence type="inferred from homology"/>
<comment type="function">
    <text evidence="1 2 3 5 7 8 9">Putative epoxide hydrolase; part of the fragmented gene cluster that mediates the biosynthesis of dothistromin (DOTH), a polyketide toxin very similar in structure to the aflatoxin precursor, versicolorin B (PubMed:12039746, PubMed:17683963, PubMed:22069571, PubMed:23207690, PubMed:23448391). The first step of the pathway is the conversion of acetate to norsolorinic acid (NOR) and requires the fatty acid synthase subunits hexA and hexB, as well as the polyketide synthase pksA (PubMed:16649078, PubMed:23207690). PksA combines a hexanoyl starter unit and 7 malonyl-CoA extender units to synthesize the precursor NOR (By similarity). The hexanoyl starter unit is provided to the acyl-carrier protein (ACP) domain by the fungal fatty acid synthase hexA/hexB (By similarity). The second step is the conversion of NOR to averantin (AVN) and requires the norsolorinic acid ketoreductase nor1, which catalyzes the dehydration of norsolorinic acid to form (1'S)-averantin (PubMed:23207690). The cytochrome P450 monooxygenase avnA then catalyzes the hydroxylation of AVN to 5'hydroxyaverantin (HAVN) (PubMed:23207690). The next step is performed by adhA that transforms HAVN to averufin (AVF) (PubMed:23207690). Averufin might then be converted to hydroxyversicolorone by cypX and avfA (PubMed:23207690). Hydroxyversicolorone is further converted versiconal hemiacetal acetate (VHA) by moxY (PubMed:23207690). VHA is then the substrate for the versiconal hemiacetal acetate esterase est1 to yield versiconal (VAL) (PubMed:23207690). Versicolorin B synthase vbsA then converts VAL to versicolorin B (VERB) by closing the bisfuran ring (PubMed:16649078, PubMed:23207690). Then, the activity of the versicolorin B desaturase verB leads to versicolorin A (VERA) (PubMed:23207690). DotB, a predicted chloroperoxidase, may perform epoxidation of the A-ring of VERA (PubMed:23207690). Alternatively, a cytochrome P450, such as cypX or avnA could catalyze this step (PubMed:23207690). It is also possible that another, uncharacterized, cytochrome P450 enzyme is responsible for this step (PubMed:23207690). Opening of the epoxide could potentially be achieved by the epoxide hydrolase epoA (PubMed:23207690). However, epoA seems not to be required for DOTH biosynthesis, but other epoxide hydrolases may have the ability to complement this hydrolysis (PubMed:23207690). Alternatively, opening of the epoxide ring could be achieved non-enzymatically (PubMed:23207690). The next step is the deoxygenation of ring A to yield the 5,8-dihydroxyanthraquinone which is most likely catalyzed by the NADPH dehydrogenase encoded by ver1 (PubMed:23207690). The last stages of DOTH biosynthesis are proposed to involve hydroxylation of the bisfuran (PubMed:23207690). OrdB and norB might have oxidative roles here (PubMed:23207690). An alternative possibility is that cytochrome P450 monoogenases such as avnA and cypX might perform these steps in addition to previously proposed steps (PubMed:23207690).</text>
</comment>
<comment type="pathway">
    <text evidence="5 8">Mycotoxin biosynthesis.</text>
</comment>
<comment type="similarity">
    <text evidence="6">Belongs to the peptidase S33 family.</text>
</comment>